<feature type="signal peptide" evidence="2">
    <location>
        <begin position="1"/>
        <end position="21"/>
    </location>
</feature>
<feature type="chain" id="PRO_0000318581" description="von Willebrand factor C and EGF domain-containing protein">
    <location>
        <begin position="22"/>
        <end position="929"/>
    </location>
</feature>
<feature type="domain" description="EGF-like 1" evidence="3">
    <location>
        <begin position="70"/>
        <end position="98"/>
    </location>
</feature>
<feature type="domain" description="EGF-like 2; calcium-binding" evidence="3">
    <location>
        <begin position="142"/>
        <end position="180"/>
    </location>
</feature>
<feature type="domain" description="EGF-like 3; calcium-binding" evidence="3">
    <location>
        <begin position="181"/>
        <end position="219"/>
    </location>
</feature>
<feature type="domain" description="EGF-like 4; calcium-binding" evidence="3">
    <location>
        <begin position="220"/>
        <end position="262"/>
    </location>
</feature>
<feature type="domain" description="VWFC 1" evidence="4">
    <location>
        <begin position="376"/>
        <end position="433"/>
    </location>
</feature>
<feature type="domain" description="VWFC 2" evidence="4">
    <location>
        <begin position="433"/>
        <end position="494"/>
    </location>
</feature>
<feature type="domain" description="VWFC 3" evidence="4">
    <location>
        <begin position="491"/>
        <end position="552"/>
    </location>
</feature>
<feature type="domain" description="VWFC 4" evidence="4">
    <location>
        <begin position="558"/>
        <end position="618"/>
    </location>
</feature>
<feature type="domain" description="VWFC 5" evidence="4">
    <location>
        <begin position="619"/>
        <end position="677"/>
    </location>
</feature>
<feature type="domain" description="VWFC 6" evidence="4">
    <location>
        <begin position="677"/>
        <end position="762"/>
    </location>
</feature>
<feature type="region of interest" description="Disordered" evidence="5">
    <location>
        <begin position="291"/>
        <end position="317"/>
    </location>
</feature>
<feature type="region of interest" description="Disordered" evidence="5">
    <location>
        <begin position="339"/>
        <end position="374"/>
    </location>
</feature>
<feature type="region of interest" description="Disordered" evidence="5">
    <location>
        <begin position="731"/>
        <end position="774"/>
    </location>
</feature>
<feature type="region of interest" description="Disordered" evidence="5">
    <location>
        <begin position="791"/>
        <end position="861"/>
    </location>
</feature>
<feature type="region of interest" description="Disordered" evidence="5">
    <location>
        <begin position="879"/>
        <end position="929"/>
    </location>
</feature>
<feature type="compositionally biased region" description="Low complexity" evidence="5">
    <location>
        <begin position="339"/>
        <end position="353"/>
    </location>
</feature>
<feature type="compositionally biased region" description="Basic and acidic residues" evidence="5">
    <location>
        <begin position="743"/>
        <end position="755"/>
    </location>
</feature>
<feature type="compositionally biased region" description="Polar residues" evidence="5">
    <location>
        <begin position="791"/>
        <end position="807"/>
    </location>
</feature>
<feature type="compositionally biased region" description="Low complexity" evidence="5">
    <location>
        <begin position="889"/>
        <end position="903"/>
    </location>
</feature>
<feature type="glycosylation site" description="N-linked (GlcNAc...) asparagine" evidence="2">
    <location>
        <position position="454"/>
    </location>
</feature>
<feature type="glycosylation site" description="N-linked (GlcNAc...) asparagine" evidence="2">
    <location>
        <position position="464"/>
    </location>
</feature>
<feature type="glycosylation site" description="N-linked (GlcNAc...) asparagine" evidence="2">
    <location>
        <position position="787"/>
    </location>
</feature>
<feature type="disulfide bond" evidence="3">
    <location>
        <begin position="146"/>
        <end position="155"/>
    </location>
</feature>
<feature type="disulfide bond" evidence="3">
    <location>
        <begin position="151"/>
        <end position="164"/>
    </location>
</feature>
<feature type="disulfide bond" evidence="3">
    <location>
        <begin position="166"/>
        <end position="179"/>
    </location>
</feature>
<feature type="disulfide bond" evidence="3">
    <location>
        <begin position="185"/>
        <end position="194"/>
    </location>
</feature>
<feature type="disulfide bond" evidence="3">
    <location>
        <begin position="190"/>
        <end position="203"/>
    </location>
</feature>
<feature type="disulfide bond" evidence="3">
    <location>
        <begin position="205"/>
        <end position="218"/>
    </location>
</feature>
<feature type="disulfide bond" evidence="3">
    <location>
        <begin position="224"/>
        <end position="237"/>
    </location>
</feature>
<feature type="disulfide bond" evidence="3">
    <location>
        <begin position="233"/>
        <end position="246"/>
    </location>
</feature>
<feature type="disulfide bond" evidence="3">
    <location>
        <begin position="248"/>
        <end position="261"/>
    </location>
</feature>
<feature type="sequence conflict" description="In Ref. 1; BAE32265." evidence="6" ref="1">
    <original>L</original>
    <variation>P</variation>
    <location>
        <position position="344"/>
    </location>
</feature>
<feature type="sequence conflict" description="In Ref. 1; BAE32265." evidence="6" ref="1">
    <original>S</original>
    <variation>P</variation>
    <location>
        <position position="375"/>
    </location>
</feature>
<feature type="sequence conflict" description="In Ref. 1; BAE32265." evidence="6" ref="1">
    <original>V</original>
    <variation>I</variation>
    <location>
        <position position="777"/>
    </location>
</feature>
<evidence type="ECO:0000250" key="1"/>
<evidence type="ECO:0000255" key="2"/>
<evidence type="ECO:0000255" key="3">
    <source>
        <dbReference type="PROSITE-ProRule" id="PRU00076"/>
    </source>
</evidence>
<evidence type="ECO:0000255" key="4">
    <source>
        <dbReference type="PROSITE-ProRule" id="PRU00220"/>
    </source>
</evidence>
<evidence type="ECO:0000256" key="5">
    <source>
        <dbReference type="SAM" id="MobiDB-lite"/>
    </source>
</evidence>
<evidence type="ECO:0000305" key="6"/>
<proteinExistence type="evidence at transcript level"/>
<protein>
    <recommendedName>
        <fullName>von Willebrand factor C and EGF domain-containing protein</fullName>
    </recommendedName>
</protein>
<gene>
    <name type="primary">Vwce</name>
</gene>
<keyword id="KW-0106">Calcium</keyword>
<keyword id="KW-1015">Disulfide bond</keyword>
<keyword id="KW-0245">EGF-like domain</keyword>
<keyword id="KW-0325">Glycoprotein</keyword>
<keyword id="KW-1185">Reference proteome</keyword>
<keyword id="KW-0677">Repeat</keyword>
<keyword id="KW-0964">Secreted</keyword>
<keyword id="KW-0732">Signal</keyword>
<comment type="function">
    <text evidence="1">May be a regulatory element in the beta-catenin signaling pathway and a target for chemoprevention of hapatocellular carcinoma.</text>
</comment>
<comment type="subcellular location">
    <subcellularLocation>
        <location evidence="6">Secreted</location>
    </subcellularLocation>
</comment>
<reference key="1">
    <citation type="journal article" date="2005" name="Science">
        <title>The transcriptional landscape of the mammalian genome.</title>
        <authorList>
            <person name="Carninci P."/>
            <person name="Kasukawa T."/>
            <person name="Katayama S."/>
            <person name="Gough J."/>
            <person name="Frith M.C."/>
            <person name="Maeda N."/>
            <person name="Oyama R."/>
            <person name="Ravasi T."/>
            <person name="Lenhard B."/>
            <person name="Wells C."/>
            <person name="Kodzius R."/>
            <person name="Shimokawa K."/>
            <person name="Bajic V.B."/>
            <person name="Brenner S.E."/>
            <person name="Batalov S."/>
            <person name="Forrest A.R."/>
            <person name="Zavolan M."/>
            <person name="Davis M.J."/>
            <person name="Wilming L.G."/>
            <person name="Aidinis V."/>
            <person name="Allen J.E."/>
            <person name="Ambesi-Impiombato A."/>
            <person name="Apweiler R."/>
            <person name="Aturaliya R.N."/>
            <person name="Bailey T.L."/>
            <person name="Bansal M."/>
            <person name="Baxter L."/>
            <person name="Beisel K.W."/>
            <person name="Bersano T."/>
            <person name="Bono H."/>
            <person name="Chalk A.M."/>
            <person name="Chiu K.P."/>
            <person name="Choudhary V."/>
            <person name="Christoffels A."/>
            <person name="Clutterbuck D.R."/>
            <person name="Crowe M.L."/>
            <person name="Dalla E."/>
            <person name="Dalrymple B.P."/>
            <person name="de Bono B."/>
            <person name="Della Gatta G."/>
            <person name="di Bernardo D."/>
            <person name="Down T."/>
            <person name="Engstrom P."/>
            <person name="Fagiolini M."/>
            <person name="Faulkner G."/>
            <person name="Fletcher C.F."/>
            <person name="Fukushima T."/>
            <person name="Furuno M."/>
            <person name="Futaki S."/>
            <person name="Gariboldi M."/>
            <person name="Georgii-Hemming P."/>
            <person name="Gingeras T.R."/>
            <person name="Gojobori T."/>
            <person name="Green R.E."/>
            <person name="Gustincich S."/>
            <person name="Harbers M."/>
            <person name="Hayashi Y."/>
            <person name="Hensch T.K."/>
            <person name="Hirokawa N."/>
            <person name="Hill D."/>
            <person name="Huminiecki L."/>
            <person name="Iacono M."/>
            <person name="Ikeo K."/>
            <person name="Iwama A."/>
            <person name="Ishikawa T."/>
            <person name="Jakt M."/>
            <person name="Kanapin A."/>
            <person name="Katoh M."/>
            <person name="Kawasawa Y."/>
            <person name="Kelso J."/>
            <person name="Kitamura H."/>
            <person name="Kitano H."/>
            <person name="Kollias G."/>
            <person name="Krishnan S.P."/>
            <person name="Kruger A."/>
            <person name="Kummerfeld S.K."/>
            <person name="Kurochkin I.V."/>
            <person name="Lareau L.F."/>
            <person name="Lazarevic D."/>
            <person name="Lipovich L."/>
            <person name="Liu J."/>
            <person name="Liuni S."/>
            <person name="McWilliam S."/>
            <person name="Madan Babu M."/>
            <person name="Madera M."/>
            <person name="Marchionni L."/>
            <person name="Matsuda H."/>
            <person name="Matsuzawa S."/>
            <person name="Miki H."/>
            <person name="Mignone F."/>
            <person name="Miyake S."/>
            <person name="Morris K."/>
            <person name="Mottagui-Tabar S."/>
            <person name="Mulder N."/>
            <person name="Nakano N."/>
            <person name="Nakauchi H."/>
            <person name="Ng P."/>
            <person name="Nilsson R."/>
            <person name="Nishiguchi S."/>
            <person name="Nishikawa S."/>
            <person name="Nori F."/>
            <person name="Ohara O."/>
            <person name="Okazaki Y."/>
            <person name="Orlando V."/>
            <person name="Pang K.C."/>
            <person name="Pavan W.J."/>
            <person name="Pavesi G."/>
            <person name="Pesole G."/>
            <person name="Petrovsky N."/>
            <person name="Piazza S."/>
            <person name="Reed J."/>
            <person name="Reid J.F."/>
            <person name="Ring B.Z."/>
            <person name="Ringwald M."/>
            <person name="Rost B."/>
            <person name="Ruan Y."/>
            <person name="Salzberg S.L."/>
            <person name="Sandelin A."/>
            <person name="Schneider C."/>
            <person name="Schoenbach C."/>
            <person name="Sekiguchi K."/>
            <person name="Semple C.A."/>
            <person name="Seno S."/>
            <person name="Sessa L."/>
            <person name="Sheng Y."/>
            <person name="Shibata Y."/>
            <person name="Shimada H."/>
            <person name="Shimada K."/>
            <person name="Silva D."/>
            <person name="Sinclair B."/>
            <person name="Sperling S."/>
            <person name="Stupka E."/>
            <person name="Sugiura K."/>
            <person name="Sultana R."/>
            <person name="Takenaka Y."/>
            <person name="Taki K."/>
            <person name="Tammoja K."/>
            <person name="Tan S.L."/>
            <person name="Tang S."/>
            <person name="Taylor M.S."/>
            <person name="Tegner J."/>
            <person name="Teichmann S.A."/>
            <person name="Ueda H.R."/>
            <person name="van Nimwegen E."/>
            <person name="Verardo R."/>
            <person name="Wei C.L."/>
            <person name="Yagi K."/>
            <person name="Yamanishi H."/>
            <person name="Zabarovsky E."/>
            <person name="Zhu S."/>
            <person name="Zimmer A."/>
            <person name="Hide W."/>
            <person name="Bult C."/>
            <person name="Grimmond S.M."/>
            <person name="Teasdale R.D."/>
            <person name="Liu E.T."/>
            <person name="Brusic V."/>
            <person name="Quackenbush J."/>
            <person name="Wahlestedt C."/>
            <person name="Mattick J.S."/>
            <person name="Hume D.A."/>
            <person name="Kai C."/>
            <person name="Sasaki D."/>
            <person name="Tomaru Y."/>
            <person name="Fukuda S."/>
            <person name="Kanamori-Katayama M."/>
            <person name="Suzuki M."/>
            <person name="Aoki J."/>
            <person name="Arakawa T."/>
            <person name="Iida J."/>
            <person name="Imamura K."/>
            <person name="Itoh M."/>
            <person name="Kato T."/>
            <person name="Kawaji H."/>
            <person name="Kawagashira N."/>
            <person name="Kawashima T."/>
            <person name="Kojima M."/>
            <person name="Kondo S."/>
            <person name="Konno H."/>
            <person name="Nakano K."/>
            <person name="Ninomiya N."/>
            <person name="Nishio T."/>
            <person name="Okada M."/>
            <person name="Plessy C."/>
            <person name="Shibata K."/>
            <person name="Shiraki T."/>
            <person name="Suzuki S."/>
            <person name="Tagami M."/>
            <person name="Waki K."/>
            <person name="Watahiki A."/>
            <person name="Okamura-Oho Y."/>
            <person name="Suzuki H."/>
            <person name="Kawai J."/>
            <person name="Hayashizaki Y."/>
        </authorList>
    </citation>
    <scope>NUCLEOTIDE SEQUENCE [LARGE SCALE MRNA]</scope>
    <source>
        <strain>NOD</strain>
        <tissue>Thymus</tissue>
    </source>
</reference>
<reference key="2">
    <citation type="journal article" date="2009" name="PLoS Biol.">
        <title>Lineage-specific biology revealed by a finished genome assembly of the mouse.</title>
        <authorList>
            <person name="Church D.M."/>
            <person name="Goodstadt L."/>
            <person name="Hillier L.W."/>
            <person name="Zody M.C."/>
            <person name="Goldstein S."/>
            <person name="She X."/>
            <person name="Bult C.J."/>
            <person name="Agarwala R."/>
            <person name="Cherry J.L."/>
            <person name="DiCuccio M."/>
            <person name="Hlavina W."/>
            <person name="Kapustin Y."/>
            <person name="Meric P."/>
            <person name="Maglott D."/>
            <person name="Birtle Z."/>
            <person name="Marques A.C."/>
            <person name="Graves T."/>
            <person name="Zhou S."/>
            <person name="Teague B."/>
            <person name="Potamousis K."/>
            <person name="Churas C."/>
            <person name="Place M."/>
            <person name="Herschleb J."/>
            <person name="Runnheim R."/>
            <person name="Forrest D."/>
            <person name="Amos-Landgraf J."/>
            <person name="Schwartz D.C."/>
            <person name="Cheng Z."/>
            <person name="Lindblad-Toh K."/>
            <person name="Eichler E.E."/>
            <person name="Ponting C.P."/>
        </authorList>
    </citation>
    <scope>NUCLEOTIDE SEQUENCE [LARGE SCALE GENOMIC DNA]</scope>
    <source>
        <strain>C57BL/6J</strain>
    </source>
</reference>
<accession>Q3U515</accession>
<accession>E9QME6</accession>
<dbReference type="EMBL" id="AK153937">
    <property type="protein sequence ID" value="BAE32265.1"/>
    <property type="molecule type" value="mRNA"/>
</dbReference>
<dbReference type="EMBL" id="AC132247">
    <property type="status" value="NOT_ANNOTATED_CDS"/>
    <property type="molecule type" value="Genomic_DNA"/>
</dbReference>
<dbReference type="CCDS" id="CCDS50390.1"/>
<dbReference type="RefSeq" id="NP_082189.1">
    <property type="nucleotide sequence ID" value="NM_027913.2"/>
</dbReference>
<dbReference type="FunCoup" id="Q3U515">
    <property type="interactions" value="270"/>
</dbReference>
<dbReference type="STRING" id="10090.ENSMUSP00000056958"/>
<dbReference type="GlyCosmos" id="Q3U515">
    <property type="glycosylation" value="3 sites, No reported glycans"/>
</dbReference>
<dbReference type="GlyGen" id="Q3U515">
    <property type="glycosylation" value="4 sites"/>
</dbReference>
<dbReference type="iPTMnet" id="Q3U515"/>
<dbReference type="PhosphoSitePlus" id="Q3U515"/>
<dbReference type="PaxDb" id="10090-ENSMUSP00000056958"/>
<dbReference type="ProteomicsDB" id="297837"/>
<dbReference type="Antibodypedia" id="52915">
    <property type="antibodies" value="104 antibodies from 17 providers"/>
</dbReference>
<dbReference type="Ensembl" id="ENSMUST00000055115.9">
    <property type="protein sequence ID" value="ENSMUSP00000056958.8"/>
    <property type="gene ID" value="ENSMUSG00000043789.9"/>
</dbReference>
<dbReference type="GeneID" id="71768"/>
<dbReference type="KEGG" id="mmu:71768"/>
<dbReference type="UCSC" id="uc008gqo.2">
    <property type="organism name" value="mouse"/>
</dbReference>
<dbReference type="AGR" id="MGI:1919018"/>
<dbReference type="CTD" id="220001"/>
<dbReference type="MGI" id="MGI:1919018">
    <property type="gene designation" value="Vwce"/>
</dbReference>
<dbReference type="VEuPathDB" id="HostDB:ENSMUSG00000043789"/>
<dbReference type="eggNOG" id="KOG1216">
    <property type="taxonomic scope" value="Eukaryota"/>
</dbReference>
<dbReference type="eggNOG" id="KOG1217">
    <property type="taxonomic scope" value="Eukaryota"/>
</dbReference>
<dbReference type="GeneTree" id="ENSGT00940000161089"/>
<dbReference type="HOGENOM" id="CLU_013313_1_0_1"/>
<dbReference type="InParanoid" id="Q3U515"/>
<dbReference type="OMA" id="SSCEGQC"/>
<dbReference type="OrthoDB" id="10045365at2759"/>
<dbReference type="PhylomeDB" id="Q3U515"/>
<dbReference type="TreeFam" id="TF330819"/>
<dbReference type="BioGRID-ORCS" id="71768">
    <property type="hits" value="1 hit in 77 CRISPR screens"/>
</dbReference>
<dbReference type="ChiTaRS" id="Vwce">
    <property type="organism name" value="mouse"/>
</dbReference>
<dbReference type="PRO" id="PR:Q3U515"/>
<dbReference type="Proteomes" id="UP000000589">
    <property type="component" value="Chromosome 19"/>
</dbReference>
<dbReference type="RNAct" id="Q3U515">
    <property type="molecule type" value="protein"/>
</dbReference>
<dbReference type="Bgee" id="ENSMUSG00000043789">
    <property type="expression patterns" value="Expressed in metanephric proximal tubule and 62 other cell types or tissues"/>
</dbReference>
<dbReference type="ExpressionAtlas" id="Q3U515">
    <property type="expression patterns" value="baseline and differential"/>
</dbReference>
<dbReference type="GO" id="GO:0005737">
    <property type="term" value="C:cytoplasm"/>
    <property type="evidence" value="ECO:0007669"/>
    <property type="project" value="Ensembl"/>
</dbReference>
<dbReference type="GO" id="GO:0005576">
    <property type="term" value="C:extracellular region"/>
    <property type="evidence" value="ECO:0007669"/>
    <property type="project" value="UniProtKB-SubCell"/>
</dbReference>
<dbReference type="GO" id="GO:0005509">
    <property type="term" value="F:calcium ion binding"/>
    <property type="evidence" value="ECO:0007669"/>
    <property type="project" value="InterPro"/>
</dbReference>
<dbReference type="GO" id="GO:0098586">
    <property type="term" value="P:cellular response to virus"/>
    <property type="evidence" value="ECO:0007669"/>
    <property type="project" value="Ensembl"/>
</dbReference>
<dbReference type="CDD" id="cd00054">
    <property type="entry name" value="EGF_CA"/>
    <property type="match status" value="3"/>
</dbReference>
<dbReference type="FunFam" id="2.10.25.10:FF:000361">
    <property type="entry name" value="von Willebrand factor C and EGF domain-containing protein"/>
    <property type="match status" value="1"/>
</dbReference>
<dbReference type="FunFam" id="2.10.25.10:FF:000401">
    <property type="entry name" value="von Willebrand factor C and EGF domain-containing protein"/>
    <property type="match status" value="1"/>
</dbReference>
<dbReference type="FunFam" id="2.10.25.10:FF:000545">
    <property type="entry name" value="von Willebrand factor C and EGF domain-containing protein"/>
    <property type="match status" value="1"/>
</dbReference>
<dbReference type="FunFam" id="2.10.25.10:FF:000697">
    <property type="entry name" value="von Willebrand factor C and EGF domain-containing protein"/>
    <property type="match status" value="1"/>
</dbReference>
<dbReference type="FunFam" id="2.10.70.10:FF:000051">
    <property type="entry name" value="von Willebrand factor C and EGF domain-containing protein"/>
    <property type="match status" value="1"/>
</dbReference>
<dbReference type="Gene3D" id="6.20.200.20">
    <property type="match status" value="4"/>
</dbReference>
<dbReference type="Gene3D" id="2.10.70.10">
    <property type="entry name" value="Complement Module, domain 1"/>
    <property type="match status" value="2"/>
</dbReference>
<dbReference type="Gene3D" id="2.10.25.10">
    <property type="entry name" value="Laminin"/>
    <property type="match status" value="4"/>
</dbReference>
<dbReference type="InterPro" id="IPR026823">
    <property type="entry name" value="cEGF"/>
</dbReference>
<dbReference type="InterPro" id="IPR001881">
    <property type="entry name" value="EGF-like_Ca-bd_dom"/>
</dbReference>
<dbReference type="InterPro" id="IPR000742">
    <property type="entry name" value="EGF-like_dom"/>
</dbReference>
<dbReference type="InterPro" id="IPR000152">
    <property type="entry name" value="EGF-type_Asp/Asn_hydroxyl_site"/>
</dbReference>
<dbReference type="InterPro" id="IPR018097">
    <property type="entry name" value="EGF_Ca-bd_CS"/>
</dbReference>
<dbReference type="InterPro" id="IPR009030">
    <property type="entry name" value="Growth_fac_rcpt_cys_sf"/>
</dbReference>
<dbReference type="InterPro" id="IPR052080">
    <property type="entry name" value="vWF_C/EGF_Fibrillin"/>
</dbReference>
<dbReference type="InterPro" id="IPR001007">
    <property type="entry name" value="VWF_dom"/>
</dbReference>
<dbReference type="PANTHER" id="PTHR47333">
    <property type="entry name" value="VON WILLEBRAND FACTOR C AND EGF DOMAIN-CONTAINING PROTEIN"/>
    <property type="match status" value="1"/>
</dbReference>
<dbReference type="PANTHER" id="PTHR47333:SF1">
    <property type="entry name" value="VON WILLEBRAND FACTOR C AND EGF DOMAIN-CONTAINING PROTEIN"/>
    <property type="match status" value="1"/>
</dbReference>
<dbReference type="Pfam" id="PF12662">
    <property type="entry name" value="cEGF"/>
    <property type="match status" value="2"/>
</dbReference>
<dbReference type="Pfam" id="PF00093">
    <property type="entry name" value="VWC"/>
    <property type="match status" value="3"/>
</dbReference>
<dbReference type="SMART" id="SM00181">
    <property type="entry name" value="EGF"/>
    <property type="match status" value="4"/>
</dbReference>
<dbReference type="SMART" id="SM00179">
    <property type="entry name" value="EGF_CA"/>
    <property type="match status" value="3"/>
</dbReference>
<dbReference type="SMART" id="SM00214">
    <property type="entry name" value="VWC"/>
    <property type="match status" value="6"/>
</dbReference>
<dbReference type="SMART" id="SM00215">
    <property type="entry name" value="VWC_out"/>
    <property type="match status" value="4"/>
</dbReference>
<dbReference type="SUPFAM" id="SSF57603">
    <property type="entry name" value="FnI-like domain"/>
    <property type="match status" value="6"/>
</dbReference>
<dbReference type="SUPFAM" id="SSF57184">
    <property type="entry name" value="Growth factor receptor domain"/>
    <property type="match status" value="1"/>
</dbReference>
<dbReference type="PROSITE" id="PS00010">
    <property type="entry name" value="ASX_HYDROXYL"/>
    <property type="match status" value="3"/>
</dbReference>
<dbReference type="PROSITE" id="PS00022">
    <property type="entry name" value="EGF_1"/>
    <property type="match status" value="1"/>
</dbReference>
<dbReference type="PROSITE" id="PS01186">
    <property type="entry name" value="EGF_2"/>
    <property type="match status" value="2"/>
</dbReference>
<dbReference type="PROSITE" id="PS50026">
    <property type="entry name" value="EGF_3"/>
    <property type="match status" value="3"/>
</dbReference>
<dbReference type="PROSITE" id="PS01187">
    <property type="entry name" value="EGF_CA"/>
    <property type="match status" value="3"/>
</dbReference>
<dbReference type="PROSITE" id="PS01208">
    <property type="entry name" value="VWFC_1"/>
    <property type="match status" value="4"/>
</dbReference>
<dbReference type="PROSITE" id="PS50184">
    <property type="entry name" value="VWFC_2"/>
    <property type="match status" value="4"/>
</dbReference>
<sequence>MWARLLLHVAYILIPLLGSSARGYTGRKAPGHYSAERRRLGPHVCLSGFGSGCCPGWAPSMGSGHCTLPLCSFGCGSGICIAPNVCSCQDGEQGATCPEAHGSCGEYGCDLTCNHGGCQEVARVCPVGFLMTETAVGIRCADIDECLSSSCEGHCVNTEGGFVCECGPGMQLSADRHSCQDTDECLGTPCQQRCKNSIGSYKCSCRAGFHLHGNRHSCIDVNECRRPQERRVCHHTCHNTVGSFLCTCRPGFRLRSDRVSCEAFPKAVLAPSAILQPRQHPAKMSLLLPEAGRPALSPGHSPPPGAPGYPTGVRTISQPSTTQVLPTFFPTQLISTPVPSSSPLGTLGPPSLLQGAVGTPSSPRGPESPKLGAGSSSCWHLGATYESGSRWNQPGCSQCLCQDGEVTCGGVRCDATCSHPVPPRDGGCCPSCTGCFHSGAIRAEGDVFSPPEENCTVCVCLAGNVSCISPECPPGPCKASPQSDCCTCVPGRCYFHGRWYTDGAVFSGGGDDCTTCVCQNGEVECSFTPCPELECPREEWLLGPGQCCFTCREPTPTTGCSLDDNGVEFPIGQIWSPGDPCELCVCQADGSVSCKRTDCVDSCPHPIRIPGQCCPDCSAGCTYTGRIFYNNETFPSVLDPCLSCICLLGSVACSPVDCPITCTYPFHPDGECCPVCHDCNFEGRKVVNGQVFTLDDEPCTRCICQLGEVSCETVPCRPICTDPSCPDSVFPLEEKQQPSPHGELAKAARNARGDTEVPVNCSSCPGPPSASPTRPMVHLLQRLLRTNLSNIQSASPSPPIAQTSSSPLLEPEGISLGKPRASQPPEPSAGSPVSPRLSTLPPAIPGTPLSPVTPESSSSTFGTQTAFQWLLSATPLTEAETPSMTNADLSETLTTSSSSQRLSAALPDTPNPVPQQSTIDTPKKENSTI</sequence>
<name>VWCE_MOUSE</name>
<organism>
    <name type="scientific">Mus musculus</name>
    <name type="common">Mouse</name>
    <dbReference type="NCBI Taxonomy" id="10090"/>
    <lineage>
        <taxon>Eukaryota</taxon>
        <taxon>Metazoa</taxon>
        <taxon>Chordata</taxon>
        <taxon>Craniata</taxon>
        <taxon>Vertebrata</taxon>
        <taxon>Euteleostomi</taxon>
        <taxon>Mammalia</taxon>
        <taxon>Eutheria</taxon>
        <taxon>Euarchontoglires</taxon>
        <taxon>Glires</taxon>
        <taxon>Rodentia</taxon>
        <taxon>Myomorpha</taxon>
        <taxon>Muroidea</taxon>
        <taxon>Muridae</taxon>
        <taxon>Murinae</taxon>
        <taxon>Mus</taxon>
        <taxon>Mus</taxon>
    </lineage>
</organism>